<name>RL28_HYDS0</name>
<sequence>MAACFVCNKKAVYGKSVTFSAERNSRVFKPNLQSVKIRMPDGSTKRVMVCTKCLKAGKVVKAV</sequence>
<dbReference type="EMBL" id="CP001130">
    <property type="protein sequence ID" value="ACG56763.1"/>
    <property type="molecule type" value="Genomic_DNA"/>
</dbReference>
<dbReference type="RefSeq" id="WP_012513120.1">
    <property type="nucleotide sequence ID" value="NC_011126.1"/>
</dbReference>
<dbReference type="SMR" id="B4U6J5"/>
<dbReference type="STRING" id="380749.HY04AAS1_0071"/>
<dbReference type="KEGG" id="hya:HY04AAS1_0071"/>
<dbReference type="eggNOG" id="COG0227">
    <property type="taxonomic scope" value="Bacteria"/>
</dbReference>
<dbReference type="HOGENOM" id="CLU_064548_7_0_0"/>
<dbReference type="OrthoDB" id="9805609at2"/>
<dbReference type="GO" id="GO:1990904">
    <property type="term" value="C:ribonucleoprotein complex"/>
    <property type="evidence" value="ECO:0007669"/>
    <property type="project" value="UniProtKB-KW"/>
</dbReference>
<dbReference type="GO" id="GO:0005840">
    <property type="term" value="C:ribosome"/>
    <property type="evidence" value="ECO:0007669"/>
    <property type="project" value="UniProtKB-KW"/>
</dbReference>
<dbReference type="GO" id="GO:0003735">
    <property type="term" value="F:structural constituent of ribosome"/>
    <property type="evidence" value="ECO:0007669"/>
    <property type="project" value="InterPro"/>
</dbReference>
<dbReference type="GO" id="GO:0006412">
    <property type="term" value="P:translation"/>
    <property type="evidence" value="ECO:0007669"/>
    <property type="project" value="UniProtKB-UniRule"/>
</dbReference>
<dbReference type="Gene3D" id="2.30.170.40">
    <property type="entry name" value="Ribosomal protein L28/L24"/>
    <property type="match status" value="1"/>
</dbReference>
<dbReference type="HAMAP" id="MF_00373">
    <property type="entry name" value="Ribosomal_bL28"/>
    <property type="match status" value="1"/>
</dbReference>
<dbReference type="InterPro" id="IPR050096">
    <property type="entry name" value="Bacterial_rp_bL28"/>
</dbReference>
<dbReference type="InterPro" id="IPR026569">
    <property type="entry name" value="Ribosomal_bL28"/>
</dbReference>
<dbReference type="InterPro" id="IPR034704">
    <property type="entry name" value="Ribosomal_bL28/bL31-like_sf"/>
</dbReference>
<dbReference type="InterPro" id="IPR001383">
    <property type="entry name" value="Ribosomal_bL28_bact-type"/>
</dbReference>
<dbReference type="InterPro" id="IPR037147">
    <property type="entry name" value="Ribosomal_bL28_sf"/>
</dbReference>
<dbReference type="NCBIfam" id="TIGR00009">
    <property type="entry name" value="L28"/>
    <property type="match status" value="1"/>
</dbReference>
<dbReference type="PANTHER" id="PTHR39080">
    <property type="entry name" value="50S RIBOSOMAL PROTEIN L28"/>
    <property type="match status" value="1"/>
</dbReference>
<dbReference type="PANTHER" id="PTHR39080:SF1">
    <property type="entry name" value="LARGE RIBOSOMAL SUBUNIT PROTEIN BL28A"/>
    <property type="match status" value="1"/>
</dbReference>
<dbReference type="Pfam" id="PF00830">
    <property type="entry name" value="Ribosomal_L28"/>
    <property type="match status" value="1"/>
</dbReference>
<dbReference type="SUPFAM" id="SSF143800">
    <property type="entry name" value="L28p-like"/>
    <property type="match status" value="1"/>
</dbReference>
<feature type="chain" id="PRO_1000121645" description="Large ribosomal subunit protein bL28">
    <location>
        <begin position="1"/>
        <end position="63"/>
    </location>
</feature>
<organism>
    <name type="scientific">Hydrogenobaculum sp. (strain Y04AAS1)</name>
    <dbReference type="NCBI Taxonomy" id="380749"/>
    <lineage>
        <taxon>Bacteria</taxon>
        <taxon>Pseudomonadati</taxon>
        <taxon>Aquificota</taxon>
        <taxon>Aquificia</taxon>
        <taxon>Aquificales</taxon>
        <taxon>Aquificaceae</taxon>
        <taxon>Hydrogenobaculum</taxon>
    </lineage>
</organism>
<keyword id="KW-0687">Ribonucleoprotein</keyword>
<keyword id="KW-0689">Ribosomal protein</keyword>
<protein>
    <recommendedName>
        <fullName evidence="1">Large ribosomal subunit protein bL28</fullName>
    </recommendedName>
    <alternativeName>
        <fullName evidence="2">50S ribosomal protein L28</fullName>
    </alternativeName>
</protein>
<evidence type="ECO:0000255" key="1">
    <source>
        <dbReference type="HAMAP-Rule" id="MF_00373"/>
    </source>
</evidence>
<evidence type="ECO:0000305" key="2"/>
<reference key="1">
    <citation type="journal article" date="2009" name="J. Bacteriol.">
        <title>Complete and draft genome sequences of six members of the Aquificales.</title>
        <authorList>
            <person name="Reysenbach A.-L."/>
            <person name="Hamamura N."/>
            <person name="Podar M."/>
            <person name="Griffiths E."/>
            <person name="Ferreira S."/>
            <person name="Hochstein R."/>
            <person name="Heidelberg J."/>
            <person name="Johnson J."/>
            <person name="Mead D."/>
            <person name="Pohorille A."/>
            <person name="Sarmiento M."/>
            <person name="Schweighofer K."/>
            <person name="Seshadri R."/>
            <person name="Voytek M.A."/>
        </authorList>
    </citation>
    <scope>NUCLEOTIDE SEQUENCE [LARGE SCALE GENOMIC DNA]</scope>
    <source>
        <strain>Y04AAS1</strain>
    </source>
</reference>
<accession>B4U6J5</accession>
<comment type="similarity">
    <text evidence="1">Belongs to the bacterial ribosomal protein bL28 family.</text>
</comment>
<gene>
    <name evidence="1" type="primary">rpmB</name>
    <name type="ordered locus">HY04AAS1_0071</name>
</gene>
<proteinExistence type="inferred from homology"/>